<organism>
    <name type="scientific">Human cytomegalovirus (strain AD169)</name>
    <name type="common">HHV-5</name>
    <name type="synonym">Human herpesvirus 5</name>
    <dbReference type="NCBI Taxonomy" id="10360"/>
    <lineage>
        <taxon>Viruses</taxon>
        <taxon>Duplodnaviria</taxon>
        <taxon>Heunggongvirae</taxon>
        <taxon>Peploviricota</taxon>
        <taxon>Herviviricetes</taxon>
        <taxon>Herpesvirales</taxon>
        <taxon>Orthoherpesviridae</taxon>
        <taxon>Betaherpesvirinae</taxon>
        <taxon>Cytomegalovirus</taxon>
        <taxon>Cytomegalovirus humanbeta5</taxon>
        <taxon>Human cytomegalovirus</taxon>
    </lineage>
</organism>
<organismHost>
    <name type="scientific">Homo sapiens</name>
    <name type="common">Human</name>
    <dbReference type="NCBI Taxonomy" id="9606"/>
</organismHost>
<evidence type="ECO:0000255" key="1">
    <source>
        <dbReference type="HAMAP-Rule" id="MF_04018"/>
    </source>
</evidence>
<evidence type="ECO:0007829" key="2">
    <source>
        <dbReference type="PDB" id="8TES"/>
    </source>
</evidence>
<protein>
    <recommendedName>
        <fullName evidence="1">Triplex capsid protein 1</fullName>
    </recommendedName>
</protein>
<gene>
    <name evidence="1" type="primary">TRX1</name>
    <name type="ordered locus">UL46</name>
</gene>
<dbReference type="EMBL" id="X17403">
    <property type="protein sequence ID" value="CAA35405.1"/>
    <property type="molecule type" value="Genomic_DNA"/>
</dbReference>
<dbReference type="EMBL" id="BK000394">
    <property type="protein sequence ID" value="DAA00149.1"/>
    <property type="molecule type" value="Genomic_DNA"/>
</dbReference>
<dbReference type="PIR" id="S09809">
    <property type="entry name" value="S09809"/>
</dbReference>
<dbReference type="RefSeq" id="YP_081504.1">
    <property type="nucleotide sequence ID" value="NC_006273.2"/>
</dbReference>
<dbReference type="PDB" id="5VKU">
    <property type="method" value="EM"/>
    <property type="resolution" value="3.90 A"/>
    <property type="chains" value="g/j/m/p/s=1-290"/>
</dbReference>
<dbReference type="PDB" id="7ET3">
    <property type="method" value="EM"/>
    <property type="resolution" value="4.20 A"/>
    <property type="chains" value="g/m=1-290"/>
</dbReference>
<dbReference type="PDB" id="7LIV">
    <property type="method" value="EM"/>
    <property type="resolution" value="3.60 A"/>
    <property type="chains" value="p=1-290"/>
</dbReference>
<dbReference type="PDB" id="8TEP">
    <property type="method" value="EM"/>
    <property type="resolution" value="3.50 A"/>
    <property type="chains" value="T/W=1-290"/>
</dbReference>
<dbReference type="PDB" id="8TES">
    <property type="method" value="EM"/>
    <property type="resolution" value="3.27 A"/>
    <property type="chains" value="T/W=1-290"/>
</dbReference>
<dbReference type="PDB" id="8TET">
    <property type="method" value="EM"/>
    <property type="resolution" value="4.26 A"/>
    <property type="chains" value="T/W=1-290"/>
</dbReference>
<dbReference type="PDB" id="8TEU">
    <property type="method" value="EM"/>
    <property type="resolution" value="4.01 A"/>
    <property type="chains" value="T/W=1-290"/>
</dbReference>
<dbReference type="PDB" id="8TEW">
    <property type="method" value="EM"/>
    <property type="resolution" value="3.02 A"/>
    <property type="chains" value="T/W=1-290"/>
</dbReference>
<dbReference type="PDBsum" id="5VKU"/>
<dbReference type="PDBsum" id="7ET3"/>
<dbReference type="PDBsum" id="7LIV"/>
<dbReference type="PDBsum" id="8TEP"/>
<dbReference type="PDBsum" id="8TES"/>
<dbReference type="PDBsum" id="8TET"/>
<dbReference type="PDBsum" id="8TEU"/>
<dbReference type="PDBsum" id="8TEW"/>
<dbReference type="EMDB" id="EMD-23386"/>
<dbReference type="EMDB" id="EMD-41194"/>
<dbReference type="EMDB" id="EMD-41200"/>
<dbReference type="EMDB" id="EMD-41201"/>
<dbReference type="EMDB" id="EMD-41202"/>
<dbReference type="EMDB" id="EMD-41204"/>
<dbReference type="EMDB" id="EMD-44639"/>
<dbReference type="EMDB" id="EMD-44640"/>
<dbReference type="EMDB" id="EMD-44647"/>
<dbReference type="EMDB" id="EMD-8703"/>
<dbReference type="SMR" id="P16783"/>
<dbReference type="IntAct" id="P16783">
    <property type="interactions" value="1"/>
</dbReference>
<dbReference type="GeneID" id="3077431"/>
<dbReference type="KEGG" id="vg:3077431"/>
<dbReference type="Proteomes" id="UP000008991">
    <property type="component" value="Segment"/>
</dbReference>
<dbReference type="Proteomes" id="UP000008992">
    <property type="component" value="Segment"/>
</dbReference>
<dbReference type="GO" id="GO:0042025">
    <property type="term" value="C:host cell nucleus"/>
    <property type="evidence" value="ECO:0007669"/>
    <property type="project" value="UniProtKB-SubCell"/>
</dbReference>
<dbReference type="GO" id="GO:0019028">
    <property type="term" value="C:viral capsid"/>
    <property type="evidence" value="ECO:0007669"/>
    <property type="project" value="UniProtKB-KW"/>
</dbReference>
<dbReference type="GO" id="GO:0003677">
    <property type="term" value="F:DNA binding"/>
    <property type="evidence" value="ECO:0007669"/>
    <property type="project" value="InterPro"/>
</dbReference>
<dbReference type="GO" id="GO:0019069">
    <property type="term" value="P:viral capsid assembly"/>
    <property type="evidence" value="ECO:0007669"/>
    <property type="project" value="InterPro"/>
</dbReference>
<dbReference type="HAMAP" id="MF_04018">
    <property type="entry name" value="HSV_TRX1"/>
    <property type="match status" value="1"/>
</dbReference>
<dbReference type="InterPro" id="IPR004999">
    <property type="entry name" value="Herpes_1"/>
</dbReference>
<dbReference type="Pfam" id="PF03327">
    <property type="entry name" value="Herpes_VP19C"/>
    <property type="match status" value="1"/>
</dbReference>
<comment type="function">
    <text evidence="1">Structural component of the T=16 icosahedral capsid. The capsid is composed of pentamers and hexamers of major capsid protein/MCP, which are linked together by heterotrimers called triplexes. These triplexes are formed by a single molecule of triplex protein 1/TRX1 and two copies of triplex protein 2/TRX2. Additionally, TRX1 is required for efficient transport of TRX2 to the nucleus, which is the site of capsid assembly.</text>
</comment>
<comment type="subunit">
    <text evidence="1">Interacts with TRX2, MCP and capsid vertex component 2/CVC2.</text>
</comment>
<comment type="subcellular location">
    <subcellularLocation>
        <location evidence="1">Virion</location>
    </subcellularLocation>
    <subcellularLocation>
        <location evidence="1">Host nucleus</location>
    </subcellularLocation>
</comment>
<comment type="similarity">
    <text evidence="1">Belongs to the herpesviridae TRX1 protein family.</text>
</comment>
<name>TRX1_HCMVA</name>
<feature type="chain" id="PRO_0000115724" description="Triplex capsid protein 1">
    <location>
        <begin position="1"/>
        <end position="290"/>
    </location>
</feature>
<feature type="helix" evidence="2">
    <location>
        <begin position="3"/>
        <end position="7"/>
    </location>
</feature>
<feature type="turn" evidence="2">
    <location>
        <begin position="13"/>
        <end position="15"/>
    </location>
</feature>
<feature type="helix" evidence="2">
    <location>
        <begin position="19"/>
        <end position="27"/>
    </location>
</feature>
<feature type="strand" evidence="2">
    <location>
        <begin position="32"/>
        <end position="39"/>
    </location>
</feature>
<feature type="turn" evidence="2">
    <location>
        <begin position="40"/>
        <end position="42"/>
    </location>
</feature>
<feature type="strand" evidence="2">
    <location>
        <begin position="46"/>
        <end position="53"/>
    </location>
</feature>
<feature type="helix" evidence="2">
    <location>
        <begin position="54"/>
        <end position="57"/>
    </location>
</feature>
<feature type="turn" evidence="2">
    <location>
        <begin position="58"/>
        <end position="60"/>
    </location>
</feature>
<feature type="strand" evidence="2">
    <location>
        <begin position="66"/>
        <end position="71"/>
    </location>
</feature>
<feature type="strand" evidence="2">
    <location>
        <begin position="73"/>
        <end position="77"/>
    </location>
</feature>
<feature type="strand" evidence="2">
    <location>
        <begin position="79"/>
        <end position="83"/>
    </location>
</feature>
<feature type="helix" evidence="2">
    <location>
        <begin position="84"/>
        <end position="90"/>
    </location>
</feature>
<feature type="strand" evidence="2">
    <location>
        <begin position="92"/>
        <end position="94"/>
    </location>
</feature>
<feature type="helix" evidence="2">
    <location>
        <begin position="96"/>
        <end position="105"/>
    </location>
</feature>
<feature type="helix" evidence="2">
    <location>
        <begin position="109"/>
        <end position="119"/>
    </location>
</feature>
<feature type="helix" evidence="2">
    <location>
        <begin position="125"/>
        <end position="128"/>
    </location>
</feature>
<feature type="strand" evidence="2">
    <location>
        <begin position="129"/>
        <end position="139"/>
    </location>
</feature>
<feature type="strand" evidence="2">
    <location>
        <begin position="141"/>
        <end position="152"/>
    </location>
</feature>
<feature type="strand" evidence="2">
    <location>
        <begin position="159"/>
        <end position="161"/>
    </location>
</feature>
<feature type="strand" evidence="2">
    <location>
        <begin position="165"/>
        <end position="169"/>
    </location>
</feature>
<feature type="strand" evidence="2">
    <location>
        <begin position="181"/>
        <end position="192"/>
    </location>
</feature>
<feature type="strand" evidence="2">
    <location>
        <begin position="194"/>
        <end position="197"/>
    </location>
</feature>
<feature type="strand" evidence="2">
    <location>
        <begin position="199"/>
        <end position="208"/>
    </location>
</feature>
<feature type="helix" evidence="2">
    <location>
        <begin position="212"/>
        <end position="222"/>
    </location>
</feature>
<feature type="helix" evidence="2">
    <location>
        <begin position="224"/>
        <end position="236"/>
    </location>
</feature>
<feature type="strand" evidence="2">
    <location>
        <begin position="245"/>
        <end position="255"/>
    </location>
</feature>
<feature type="helix" evidence="2">
    <location>
        <begin position="256"/>
        <end position="258"/>
    </location>
</feature>
<feature type="strand" evidence="2">
    <location>
        <begin position="259"/>
        <end position="266"/>
    </location>
</feature>
<feature type="strand" evidence="2">
    <location>
        <begin position="269"/>
        <end position="276"/>
    </location>
</feature>
<feature type="strand" evidence="2">
    <location>
        <begin position="287"/>
        <end position="289"/>
    </location>
</feature>
<sequence>MDARAVAKRPRDPADEDNELVTALKAKREVNTISVRYLYHADHQALTARFFVPEGLVEFEAQPGALLIRMETGCDSPRHLYISLYLLGIRASNVSASTRCLLESVYTASAARAALQWLDLGPHLLHRRLETLGCVKTVSLGITSLLTCVMRGYLYNTLKTEVFALMIPKDMYLTWEETRGRLQYVYLIIVYDYDGPETRPGIYVLTSSIAHWQTLVDVARGKFARERCSFVNRRITRPRQIPLCTGVIQKLGWCLADDIHTSFLVHKELKLSVVRLDNFSVELGDFREFV</sequence>
<keyword id="KW-0002">3D-structure</keyword>
<keyword id="KW-0167">Capsid protein</keyword>
<keyword id="KW-1048">Host nucleus</keyword>
<keyword id="KW-1185">Reference proteome</keyword>
<keyword id="KW-0946">Virion</keyword>
<reference key="1">
    <citation type="journal article" date="1990" name="Curr. Top. Microbiol. Immunol.">
        <title>Analysis of the protein-coding content of the sequence of human cytomegalovirus strain AD169.</title>
        <authorList>
            <person name="Chee M.S."/>
            <person name="Bankier A.T."/>
            <person name="Beck S."/>
            <person name="Bohni R."/>
            <person name="Brown C.M."/>
            <person name="Cerny R."/>
            <person name="Horsnell T."/>
            <person name="Hutchison C.A. III"/>
            <person name="Kouzarides T."/>
            <person name="Martignetti J.A."/>
            <person name="Preddie E."/>
            <person name="Satchwell S.C."/>
            <person name="Tomlinson P."/>
            <person name="Weston K.M."/>
            <person name="Barrell B.G."/>
        </authorList>
    </citation>
    <scope>NUCLEOTIDE SEQUENCE [LARGE SCALE GENOMIC DNA]</scope>
</reference>
<reference key="2">
    <citation type="journal article" date="2003" name="J. Gen. Virol.">
        <title>The human cytomegalovirus genome revisited: comparison with the chimpanzee cytomegalovirus genome.</title>
        <authorList>
            <person name="Davison A.J."/>
            <person name="Dolan A."/>
            <person name="Akter P."/>
            <person name="Addison C."/>
            <person name="Dargan D.J."/>
            <person name="Alcendor D.J."/>
            <person name="McGeoch D.J."/>
            <person name="Hayward G.S."/>
        </authorList>
    </citation>
    <scope>GENOME REANNOTATION</scope>
</reference>
<reference key="3">
    <citation type="journal article" date="2003" name="J. Gen. Virol.">
        <authorList>
            <person name="Davison A.J."/>
            <person name="Dolan A."/>
            <person name="Akter P."/>
            <person name="Addison C."/>
            <person name="Dargan D.J."/>
            <person name="Alcendor D.J."/>
            <person name="McGeoch D.J."/>
            <person name="Hayward G.S."/>
        </authorList>
    </citation>
    <scope>ERRATUM OF PUBMED:12533697</scope>
</reference>
<reference key="4">
    <citation type="journal article" date="2004" name="J. Virol.">
        <title>Identification of proteins in human cytomegalovirus (HCMV) particles: the HCMV proteome.</title>
        <authorList>
            <person name="Varnum S.M."/>
            <person name="Streblow D.N."/>
            <person name="Monroe M.E."/>
            <person name="Smith P."/>
            <person name="Auberry K.J."/>
            <person name="Pasa-Tolic L."/>
            <person name="Wang D."/>
            <person name="Camp D.G. II"/>
            <person name="Rodland K."/>
            <person name="Wiley S."/>
            <person name="Britt W."/>
            <person name="Shenk T."/>
            <person name="Smith R.D."/>
            <person name="Nelson J.A."/>
        </authorList>
    </citation>
    <scope>IDENTIFICATION</scope>
</reference>
<reference key="5">
    <citation type="journal article" date="2004" name="J. Virol.">
        <authorList>
            <person name="Varnum S.M."/>
            <person name="Streblow D.N."/>
            <person name="Monroe M.E."/>
            <person name="Smith P."/>
            <person name="Auberry K.J."/>
            <person name="Pasa-Tolic L."/>
            <person name="Wang D."/>
            <person name="Camp D.G. II"/>
            <person name="Rodland K."/>
            <person name="Wiley S."/>
            <person name="Britt W."/>
            <person name="Shenk T."/>
            <person name="Smith R.D."/>
            <person name="Nelson J.A."/>
        </authorList>
    </citation>
    <scope>ERRATUM OF PUBMED:15452216</scope>
</reference>
<proteinExistence type="evidence at protein level"/>
<accession>P16783</accession>
<accession>Q7M6N9</accession>